<protein>
    <recommendedName>
        <fullName evidence="1">Serine/threonine transporter SstT</fullName>
    </recommendedName>
    <alternativeName>
        <fullName evidence="1">Na(+)/serine-threonine symporter</fullName>
    </alternativeName>
</protein>
<accession>Q02LI9</accession>
<comment type="function">
    <text evidence="1">Involved in the import of serine and threonine into the cell, with the concomitant import of sodium (symport system).</text>
</comment>
<comment type="catalytic activity">
    <reaction evidence="1">
        <text>L-serine(in) + Na(+)(in) = L-serine(out) + Na(+)(out)</text>
        <dbReference type="Rhea" id="RHEA:29575"/>
        <dbReference type="ChEBI" id="CHEBI:29101"/>
        <dbReference type="ChEBI" id="CHEBI:33384"/>
    </reaction>
    <physiologicalReaction direction="right-to-left" evidence="1">
        <dbReference type="Rhea" id="RHEA:29577"/>
    </physiologicalReaction>
</comment>
<comment type="catalytic activity">
    <reaction evidence="1">
        <text>L-threonine(in) + Na(+)(in) = L-threonine(out) + Na(+)(out)</text>
        <dbReference type="Rhea" id="RHEA:69999"/>
        <dbReference type="ChEBI" id="CHEBI:29101"/>
        <dbReference type="ChEBI" id="CHEBI:57926"/>
    </reaction>
    <physiologicalReaction direction="right-to-left" evidence="1">
        <dbReference type="Rhea" id="RHEA:70001"/>
    </physiologicalReaction>
</comment>
<comment type="subcellular location">
    <subcellularLocation>
        <location evidence="1">Cell inner membrane</location>
        <topology evidence="1">Multi-pass membrane protein</topology>
    </subcellularLocation>
</comment>
<comment type="similarity">
    <text evidence="1">Belongs to the dicarboxylate/amino acid:cation symporter (DAACS) (TC 2.A.23) family.</text>
</comment>
<name>SSTT_PSEAB</name>
<dbReference type="EMBL" id="CP000438">
    <property type="protein sequence ID" value="ABJ11228.1"/>
    <property type="molecule type" value="Genomic_DNA"/>
</dbReference>
<dbReference type="RefSeq" id="WP_003088680.1">
    <property type="nucleotide sequence ID" value="NZ_CP034244.1"/>
</dbReference>
<dbReference type="SMR" id="Q02LI9"/>
<dbReference type="KEGG" id="pau:PA14_38110"/>
<dbReference type="PseudoCAP" id="PA14_38110"/>
<dbReference type="HOGENOM" id="CLU_044581_0_0_6"/>
<dbReference type="BioCyc" id="PAER208963:G1G74-3204-MONOMER"/>
<dbReference type="Proteomes" id="UP000000653">
    <property type="component" value="Chromosome"/>
</dbReference>
<dbReference type="GO" id="GO:0005886">
    <property type="term" value="C:plasma membrane"/>
    <property type="evidence" value="ECO:0007669"/>
    <property type="project" value="UniProtKB-SubCell"/>
</dbReference>
<dbReference type="GO" id="GO:0005295">
    <property type="term" value="F:neutral L-amino acid:sodium symporter activity"/>
    <property type="evidence" value="ECO:0007669"/>
    <property type="project" value="TreeGrafter"/>
</dbReference>
<dbReference type="GO" id="GO:0032329">
    <property type="term" value="P:serine transport"/>
    <property type="evidence" value="ECO:0007669"/>
    <property type="project" value="InterPro"/>
</dbReference>
<dbReference type="GO" id="GO:0015826">
    <property type="term" value="P:threonine transport"/>
    <property type="evidence" value="ECO:0007669"/>
    <property type="project" value="InterPro"/>
</dbReference>
<dbReference type="FunFam" id="1.10.3860.10:FF:000003">
    <property type="entry name" value="Serine/threonine transporter sstT"/>
    <property type="match status" value="1"/>
</dbReference>
<dbReference type="Gene3D" id="1.10.3860.10">
    <property type="entry name" value="Sodium:dicarboxylate symporter"/>
    <property type="match status" value="1"/>
</dbReference>
<dbReference type="HAMAP" id="MF_01582">
    <property type="entry name" value="Ser_Thr_transp_SstT"/>
    <property type="match status" value="1"/>
</dbReference>
<dbReference type="InterPro" id="IPR001991">
    <property type="entry name" value="Na-dicarboxylate_symporter"/>
</dbReference>
<dbReference type="InterPro" id="IPR036458">
    <property type="entry name" value="Na:dicarbo_symporter_sf"/>
</dbReference>
<dbReference type="InterPro" id="IPR023025">
    <property type="entry name" value="Ser_Thr_transp_SstT"/>
</dbReference>
<dbReference type="NCBIfam" id="NF010151">
    <property type="entry name" value="PRK13628.1"/>
    <property type="match status" value="1"/>
</dbReference>
<dbReference type="PANTHER" id="PTHR42865">
    <property type="entry name" value="PROTON/GLUTAMATE-ASPARTATE SYMPORTER"/>
    <property type="match status" value="1"/>
</dbReference>
<dbReference type="PANTHER" id="PTHR42865:SF8">
    <property type="entry name" value="SERINE_THREONINE TRANSPORTER SSTT"/>
    <property type="match status" value="1"/>
</dbReference>
<dbReference type="Pfam" id="PF00375">
    <property type="entry name" value="SDF"/>
    <property type="match status" value="1"/>
</dbReference>
<dbReference type="PRINTS" id="PR00173">
    <property type="entry name" value="EDTRNSPORT"/>
</dbReference>
<dbReference type="SUPFAM" id="SSF118215">
    <property type="entry name" value="Proton glutamate symport protein"/>
    <property type="match status" value="1"/>
</dbReference>
<gene>
    <name evidence="1" type="primary">sstT</name>
    <name type="ordered locus">PA14_38110</name>
</gene>
<keyword id="KW-0029">Amino-acid transport</keyword>
<keyword id="KW-0997">Cell inner membrane</keyword>
<keyword id="KW-1003">Cell membrane</keyword>
<keyword id="KW-0472">Membrane</keyword>
<keyword id="KW-0769">Symport</keyword>
<keyword id="KW-0812">Transmembrane</keyword>
<keyword id="KW-1133">Transmembrane helix</keyword>
<keyword id="KW-0813">Transport</keyword>
<evidence type="ECO:0000255" key="1">
    <source>
        <dbReference type="HAMAP-Rule" id="MF_01582"/>
    </source>
</evidence>
<feature type="chain" id="PRO_0000309107" description="Serine/threonine transporter SstT">
    <location>
        <begin position="1"/>
        <end position="409"/>
    </location>
</feature>
<feature type="transmembrane region" description="Helical" evidence="1">
    <location>
        <begin position="17"/>
        <end position="37"/>
    </location>
</feature>
<feature type="transmembrane region" description="Helical" evidence="1">
    <location>
        <begin position="49"/>
        <end position="69"/>
    </location>
</feature>
<feature type="transmembrane region" description="Helical" evidence="1">
    <location>
        <begin position="83"/>
        <end position="103"/>
    </location>
</feature>
<feature type="transmembrane region" description="Helical" evidence="1">
    <location>
        <begin position="142"/>
        <end position="162"/>
    </location>
</feature>
<feature type="transmembrane region" description="Helical" evidence="1">
    <location>
        <begin position="180"/>
        <end position="200"/>
    </location>
</feature>
<feature type="transmembrane region" description="Helical" evidence="1">
    <location>
        <begin position="218"/>
        <end position="238"/>
    </location>
</feature>
<feature type="transmembrane region" description="Helical" evidence="1">
    <location>
        <begin position="301"/>
        <end position="321"/>
    </location>
</feature>
<feature type="transmembrane region" description="Helical" evidence="1">
    <location>
        <begin position="331"/>
        <end position="351"/>
    </location>
</feature>
<feature type="transmembrane region" description="Helical" evidence="1">
    <location>
        <begin position="357"/>
        <end position="377"/>
    </location>
</feature>
<reference key="1">
    <citation type="journal article" date="2006" name="Genome Biol.">
        <title>Genomic analysis reveals that Pseudomonas aeruginosa virulence is combinatorial.</title>
        <authorList>
            <person name="Lee D.G."/>
            <person name="Urbach J.M."/>
            <person name="Wu G."/>
            <person name="Liberati N.T."/>
            <person name="Feinbaum R.L."/>
            <person name="Miyata S."/>
            <person name="Diggins L.T."/>
            <person name="He J."/>
            <person name="Saucier M."/>
            <person name="Deziel E."/>
            <person name="Friedman L."/>
            <person name="Li L."/>
            <person name="Grills G."/>
            <person name="Montgomery K."/>
            <person name="Kucherlapati R."/>
            <person name="Rahme L.G."/>
            <person name="Ausubel F.M."/>
        </authorList>
    </citation>
    <scope>NUCLEOTIDE SEQUENCE [LARGE SCALE GENOMIC DNA]</scope>
    <source>
        <strain>UCBPP-PA14</strain>
    </source>
</reference>
<sequence length="409" mass="42414">MTYPERPLLHLLTRTSLVGQIIVGLIAGLLLASFFPAAALKVGFIGKVFVSALKAVAPVLVFVLVMASIANHRQGQQTHIRPILLLYLVGTFSAAVVAVIASFAFPSSLVLASHPGEMSPPGGIAEVLQSLLLSVVDNPVNALISANFIGILAWAIGLGIAFRHASDTTRNLLSELSNGVSLIVKVVIRFAPLGIFGLVASTFAESGVEALKGYAHLLVVLLGCMLFVAFVVNPLIVFLKIRRNPYPLVLTCLRESGMTAFFTRSSAANIPVNLQLCERLGLHEDTYSVSIPLGATINMAGAAITITVLTLAAVHTLGIAVDVPTAILLSVVASVCACGASGVAGGSLLLIPLACSLFGIPSEVAMQVVAVGFIIAILQDSAETALNSSTDVLFTAAACLAEERKASAA</sequence>
<proteinExistence type="inferred from homology"/>
<organism>
    <name type="scientific">Pseudomonas aeruginosa (strain UCBPP-PA14)</name>
    <dbReference type="NCBI Taxonomy" id="208963"/>
    <lineage>
        <taxon>Bacteria</taxon>
        <taxon>Pseudomonadati</taxon>
        <taxon>Pseudomonadota</taxon>
        <taxon>Gammaproteobacteria</taxon>
        <taxon>Pseudomonadales</taxon>
        <taxon>Pseudomonadaceae</taxon>
        <taxon>Pseudomonas</taxon>
    </lineage>
</organism>